<feature type="chain" id="PRO_1000095801" description="Tryptophan synthase beta chain">
    <location>
        <begin position="1"/>
        <end position="406"/>
    </location>
</feature>
<feature type="modified residue" description="N6-(pyridoxal phosphate)lysine" evidence="1">
    <location>
        <position position="99"/>
    </location>
</feature>
<organism>
    <name type="scientific">Phenylobacterium zucineum (strain HLK1)</name>
    <dbReference type="NCBI Taxonomy" id="450851"/>
    <lineage>
        <taxon>Bacteria</taxon>
        <taxon>Pseudomonadati</taxon>
        <taxon>Pseudomonadota</taxon>
        <taxon>Alphaproteobacteria</taxon>
        <taxon>Caulobacterales</taxon>
        <taxon>Caulobacteraceae</taxon>
        <taxon>Phenylobacterium</taxon>
    </lineage>
</organism>
<gene>
    <name evidence="1" type="primary">trpB</name>
    <name type="ordered locus">PHZ_c0195</name>
</gene>
<sequence>MNAPSRPNDYAAYPDLKGRFGDYGGQYVPETLMPLVHELTAAYEAAKADPAFQAELAGYLTHYVGRPSPLYFAERLTRHYGGAKIYLKREELNHTGSHKINNCMGQILLAQRMGKTRIIAETGAGQHGVATATVCARFGLPCVVYMGAVDVERQKPNVFRMNLLGAEVRPVTSGSATLKDAMNEALRDWVTNVHDTYYLIGSAAGMHPYPMMVRDFQAVIGRETREQILELEGRLPDALVACVGGGSNAIGLFHPFLNDSSVKIFGVEAAGEGVETGRHAAAINGGRPGVLHGNMTYLLQDRVGQIEEAHSISAGLDYPGIGPEHAWLHDVGRATYLTATDTEALEAFRLLSELEGILPAIESSHALARLPEITREVGKDGIVVLNLSGRGDKDVNTVASYLGRQI</sequence>
<comment type="function">
    <text evidence="1">The beta subunit is responsible for the synthesis of L-tryptophan from indole and L-serine.</text>
</comment>
<comment type="catalytic activity">
    <reaction evidence="1">
        <text>(1S,2R)-1-C-(indol-3-yl)glycerol 3-phosphate + L-serine = D-glyceraldehyde 3-phosphate + L-tryptophan + H2O</text>
        <dbReference type="Rhea" id="RHEA:10532"/>
        <dbReference type="ChEBI" id="CHEBI:15377"/>
        <dbReference type="ChEBI" id="CHEBI:33384"/>
        <dbReference type="ChEBI" id="CHEBI:57912"/>
        <dbReference type="ChEBI" id="CHEBI:58866"/>
        <dbReference type="ChEBI" id="CHEBI:59776"/>
        <dbReference type="EC" id="4.2.1.20"/>
    </reaction>
</comment>
<comment type="cofactor">
    <cofactor evidence="1">
        <name>pyridoxal 5'-phosphate</name>
        <dbReference type="ChEBI" id="CHEBI:597326"/>
    </cofactor>
</comment>
<comment type="pathway">
    <text evidence="1">Amino-acid biosynthesis; L-tryptophan biosynthesis; L-tryptophan from chorismate: step 5/5.</text>
</comment>
<comment type="subunit">
    <text evidence="1">Tetramer of two alpha and two beta chains.</text>
</comment>
<comment type="similarity">
    <text evidence="1">Belongs to the TrpB family.</text>
</comment>
<evidence type="ECO:0000255" key="1">
    <source>
        <dbReference type="HAMAP-Rule" id="MF_00133"/>
    </source>
</evidence>
<accession>B4RCL0</accession>
<dbReference type="EC" id="4.2.1.20" evidence="1"/>
<dbReference type="EMBL" id="CP000747">
    <property type="protein sequence ID" value="ACG76609.1"/>
    <property type="molecule type" value="Genomic_DNA"/>
</dbReference>
<dbReference type="RefSeq" id="WP_012520757.1">
    <property type="nucleotide sequence ID" value="NC_011144.1"/>
</dbReference>
<dbReference type="SMR" id="B4RCL0"/>
<dbReference type="STRING" id="450851.PHZ_c0195"/>
<dbReference type="KEGG" id="pzu:PHZ_c0195"/>
<dbReference type="eggNOG" id="COG0133">
    <property type="taxonomic scope" value="Bacteria"/>
</dbReference>
<dbReference type="HOGENOM" id="CLU_016734_3_1_5"/>
<dbReference type="OrthoDB" id="9766131at2"/>
<dbReference type="UniPathway" id="UPA00035">
    <property type="reaction ID" value="UER00044"/>
</dbReference>
<dbReference type="Proteomes" id="UP000001868">
    <property type="component" value="Chromosome"/>
</dbReference>
<dbReference type="GO" id="GO:0005737">
    <property type="term" value="C:cytoplasm"/>
    <property type="evidence" value="ECO:0007669"/>
    <property type="project" value="TreeGrafter"/>
</dbReference>
<dbReference type="GO" id="GO:0004834">
    <property type="term" value="F:tryptophan synthase activity"/>
    <property type="evidence" value="ECO:0007669"/>
    <property type="project" value="UniProtKB-UniRule"/>
</dbReference>
<dbReference type="CDD" id="cd06446">
    <property type="entry name" value="Trp-synth_B"/>
    <property type="match status" value="1"/>
</dbReference>
<dbReference type="FunFam" id="3.40.50.1100:FF:000001">
    <property type="entry name" value="Tryptophan synthase beta chain"/>
    <property type="match status" value="1"/>
</dbReference>
<dbReference type="FunFam" id="3.40.50.1100:FF:000004">
    <property type="entry name" value="Tryptophan synthase beta chain"/>
    <property type="match status" value="1"/>
</dbReference>
<dbReference type="Gene3D" id="3.40.50.1100">
    <property type="match status" value="2"/>
</dbReference>
<dbReference type="HAMAP" id="MF_00133">
    <property type="entry name" value="Trp_synth_beta"/>
    <property type="match status" value="1"/>
</dbReference>
<dbReference type="InterPro" id="IPR006653">
    <property type="entry name" value="Trp_synth_b_CS"/>
</dbReference>
<dbReference type="InterPro" id="IPR006654">
    <property type="entry name" value="Trp_synth_beta"/>
</dbReference>
<dbReference type="InterPro" id="IPR023026">
    <property type="entry name" value="Trp_synth_beta/beta-like"/>
</dbReference>
<dbReference type="InterPro" id="IPR001926">
    <property type="entry name" value="TrpB-like_PALP"/>
</dbReference>
<dbReference type="InterPro" id="IPR036052">
    <property type="entry name" value="TrpB-like_PALP_sf"/>
</dbReference>
<dbReference type="NCBIfam" id="TIGR00263">
    <property type="entry name" value="trpB"/>
    <property type="match status" value="1"/>
</dbReference>
<dbReference type="PANTHER" id="PTHR48077:SF3">
    <property type="entry name" value="TRYPTOPHAN SYNTHASE"/>
    <property type="match status" value="1"/>
</dbReference>
<dbReference type="PANTHER" id="PTHR48077">
    <property type="entry name" value="TRYPTOPHAN SYNTHASE-RELATED"/>
    <property type="match status" value="1"/>
</dbReference>
<dbReference type="Pfam" id="PF00291">
    <property type="entry name" value="PALP"/>
    <property type="match status" value="1"/>
</dbReference>
<dbReference type="PIRSF" id="PIRSF001413">
    <property type="entry name" value="Trp_syn_beta"/>
    <property type="match status" value="1"/>
</dbReference>
<dbReference type="SUPFAM" id="SSF53686">
    <property type="entry name" value="Tryptophan synthase beta subunit-like PLP-dependent enzymes"/>
    <property type="match status" value="1"/>
</dbReference>
<dbReference type="PROSITE" id="PS00168">
    <property type="entry name" value="TRP_SYNTHASE_BETA"/>
    <property type="match status" value="1"/>
</dbReference>
<keyword id="KW-0028">Amino-acid biosynthesis</keyword>
<keyword id="KW-0057">Aromatic amino acid biosynthesis</keyword>
<keyword id="KW-0456">Lyase</keyword>
<keyword id="KW-0663">Pyridoxal phosphate</keyword>
<keyword id="KW-1185">Reference proteome</keyword>
<keyword id="KW-0822">Tryptophan biosynthesis</keyword>
<name>TRPB_PHEZH</name>
<reference key="1">
    <citation type="journal article" date="2008" name="BMC Genomics">
        <title>Complete genome of Phenylobacterium zucineum - a novel facultative intracellular bacterium isolated from human erythroleukemia cell line K562.</title>
        <authorList>
            <person name="Luo Y."/>
            <person name="Xu X."/>
            <person name="Ding Z."/>
            <person name="Liu Z."/>
            <person name="Zhang B."/>
            <person name="Yan Z."/>
            <person name="Sun J."/>
            <person name="Hu S."/>
            <person name="Hu X."/>
        </authorList>
    </citation>
    <scope>NUCLEOTIDE SEQUENCE [LARGE SCALE GENOMIC DNA]</scope>
    <source>
        <strain>HLK1</strain>
    </source>
</reference>
<proteinExistence type="inferred from homology"/>
<protein>
    <recommendedName>
        <fullName evidence="1">Tryptophan synthase beta chain</fullName>
        <ecNumber evidence="1">4.2.1.20</ecNumber>
    </recommendedName>
</protein>